<accession>C5A0T9</accession>
<proteinExistence type="inferred from homology"/>
<sequence>MDLASLRAQQIELASSVIREDRLDKDPPDLIAGADVGFEQGGEVTRAAMVLLKYPSLELVEYKVARIATTMPYIPGFLSFREYPALLAAWEMLSQKPDLVFVDGHGISHPRRLGVASHFGLLVDVPTIGVAKKRLCGKFEPLSSEPGALAPLMDKGEQLAWVWRSKARCNPLFIATGHRVSVDSALAWVQRCMKGYRLPEPTRWADAVASERPAFVRYTANQP</sequence>
<protein>
    <recommendedName>
        <fullName evidence="1">Endonuclease V</fullName>
        <ecNumber evidence="1">3.1.21.7</ecNumber>
    </recommendedName>
    <alternativeName>
        <fullName evidence="1">Deoxyinosine 3'endonuclease</fullName>
    </alternativeName>
    <alternativeName>
        <fullName evidence="1">Deoxyribonuclease V</fullName>
        <shortName evidence="1">DNase V</shortName>
    </alternativeName>
</protein>
<comment type="function">
    <text evidence="1">DNA repair enzyme involved in the repair of deaminated bases. Selectively cleaves double-stranded DNA at the second phosphodiester bond 3' to a deoxyinosine leaving behind the intact lesion on the nicked DNA.</text>
</comment>
<comment type="catalytic activity">
    <reaction evidence="1">
        <text>Endonucleolytic cleavage at apurinic or apyrimidinic sites to products with a 5'-phosphate.</text>
        <dbReference type="EC" id="3.1.21.7"/>
    </reaction>
</comment>
<comment type="cofactor">
    <cofactor evidence="1">
        <name>Mg(2+)</name>
        <dbReference type="ChEBI" id="CHEBI:18420"/>
    </cofactor>
</comment>
<comment type="subcellular location">
    <subcellularLocation>
        <location evidence="1">Cytoplasm</location>
    </subcellularLocation>
</comment>
<comment type="similarity">
    <text evidence="1">Belongs to the endonuclease V family.</text>
</comment>
<dbReference type="EC" id="3.1.21.7" evidence="1"/>
<dbReference type="EMBL" id="CP001396">
    <property type="protein sequence ID" value="ACR63029.1"/>
    <property type="molecule type" value="Genomic_DNA"/>
</dbReference>
<dbReference type="RefSeq" id="WP_000362388.1">
    <property type="nucleotide sequence ID" value="NC_012759.1"/>
</dbReference>
<dbReference type="SMR" id="C5A0T9"/>
<dbReference type="GeneID" id="75169444"/>
<dbReference type="KEGG" id="ebw:BWG_3658"/>
<dbReference type="HOGENOM" id="CLU_047631_1_0_6"/>
<dbReference type="GO" id="GO:0005737">
    <property type="term" value="C:cytoplasm"/>
    <property type="evidence" value="ECO:0007669"/>
    <property type="project" value="UniProtKB-SubCell"/>
</dbReference>
<dbReference type="GO" id="GO:0043737">
    <property type="term" value="F:deoxyribonuclease V activity"/>
    <property type="evidence" value="ECO:0007669"/>
    <property type="project" value="UniProtKB-UniRule"/>
</dbReference>
<dbReference type="GO" id="GO:0000287">
    <property type="term" value="F:magnesium ion binding"/>
    <property type="evidence" value="ECO:0007669"/>
    <property type="project" value="UniProtKB-UniRule"/>
</dbReference>
<dbReference type="GO" id="GO:0016891">
    <property type="term" value="F:RNA endonuclease activity, producing 5'-phosphomonoesters"/>
    <property type="evidence" value="ECO:0007669"/>
    <property type="project" value="TreeGrafter"/>
</dbReference>
<dbReference type="GO" id="GO:0003727">
    <property type="term" value="F:single-stranded RNA binding"/>
    <property type="evidence" value="ECO:0007669"/>
    <property type="project" value="TreeGrafter"/>
</dbReference>
<dbReference type="GO" id="GO:0006281">
    <property type="term" value="P:DNA repair"/>
    <property type="evidence" value="ECO:0007669"/>
    <property type="project" value="UniProtKB-UniRule"/>
</dbReference>
<dbReference type="CDD" id="cd06559">
    <property type="entry name" value="Endonuclease_V"/>
    <property type="match status" value="1"/>
</dbReference>
<dbReference type="FunFam" id="3.30.2170.10:FF:000001">
    <property type="entry name" value="Endonuclease V"/>
    <property type="match status" value="1"/>
</dbReference>
<dbReference type="Gene3D" id="3.30.2170.10">
    <property type="entry name" value="archaeoglobus fulgidus dsm 4304 superfamily"/>
    <property type="match status" value="1"/>
</dbReference>
<dbReference type="HAMAP" id="MF_00801">
    <property type="entry name" value="Endonuclease_5"/>
    <property type="match status" value="1"/>
</dbReference>
<dbReference type="InterPro" id="IPR007581">
    <property type="entry name" value="Endonuclease-V"/>
</dbReference>
<dbReference type="NCBIfam" id="NF008629">
    <property type="entry name" value="PRK11617.1"/>
    <property type="match status" value="1"/>
</dbReference>
<dbReference type="PANTHER" id="PTHR28511">
    <property type="entry name" value="ENDONUCLEASE V"/>
    <property type="match status" value="1"/>
</dbReference>
<dbReference type="PANTHER" id="PTHR28511:SF1">
    <property type="entry name" value="ENDONUCLEASE V"/>
    <property type="match status" value="1"/>
</dbReference>
<dbReference type="Pfam" id="PF04493">
    <property type="entry name" value="Endonuclease_5"/>
    <property type="match status" value="1"/>
</dbReference>
<keyword id="KW-0963">Cytoplasm</keyword>
<keyword id="KW-0227">DNA damage</keyword>
<keyword id="KW-0234">DNA repair</keyword>
<keyword id="KW-0255">Endonuclease</keyword>
<keyword id="KW-0378">Hydrolase</keyword>
<keyword id="KW-0460">Magnesium</keyword>
<keyword id="KW-0479">Metal-binding</keyword>
<keyword id="KW-0540">Nuclease</keyword>
<evidence type="ECO:0000255" key="1">
    <source>
        <dbReference type="HAMAP-Rule" id="MF_00801"/>
    </source>
</evidence>
<gene>
    <name evidence="1" type="primary">nfi</name>
    <name type="ordered locus">BWG_3658</name>
</gene>
<reference key="1">
    <citation type="journal article" date="2009" name="J. Bacteriol.">
        <title>Genomic sequencing reveals regulatory mutations and recombinational events in the widely used MC4100 lineage of Escherichia coli K-12.</title>
        <authorList>
            <person name="Ferenci T."/>
            <person name="Zhou Z."/>
            <person name="Betteridge T."/>
            <person name="Ren Y."/>
            <person name="Liu Y."/>
            <person name="Feng L."/>
            <person name="Reeves P.R."/>
            <person name="Wang L."/>
        </authorList>
    </citation>
    <scope>NUCLEOTIDE SEQUENCE [LARGE SCALE GENOMIC DNA]</scope>
    <source>
        <strain>K12 / MC4100 / BW2952</strain>
    </source>
</reference>
<name>NFI_ECOBW</name>
<organism>
    <name type="scientific">Escherichia coli (strain K12 / MC4100 / BW2952)</name>
    <dbReference type="NCBI Taxonomy" id="595496"/>
    <lineage>
        <taxon>Bacteria</taxon>
        <taxon>Pseudomonadati</taxon>
        <taxon>Pseudomonadota</taxon>
        <taxon>Gammaproteobacteria</taxon>
        <taxon>Enterobacterales</taxon>
        <taxon>Enterobacteriaceae</taxon>
        <taxon>Escherichia</taxon>
    </lineage>
</organism>
<feature type="chain" id="PRO_1000212973" description="Endonuclease V">
    <location>
        <begin position="1"/>
        <end position="223"/>
    </location>
</feature>
<feature type="binding site" evidence="1">
    <location>
        <position position="35"/>
    </location>
    <ligand>
        <name>Mg(2+)</name>
        <dbReference type="ChEBI" id="CHEBI:18420"/>
    </ligand>
</feature>
<feature type="binding site" evidence="1">
    <location>
        <position position="103"/>
    </location>
    <ligand>
        <name>Mg(2+)</name>
        <dbReference type="ChEBI" id="CHEBI:18420"/>
    </ligand>
</feature>
<feature type="site" description="Interaction with target DNA" evidence="1">
    <location>
        <position position="73"/>
    </location>
</feature>